<accession>A2RSJ4</accession>
<accession>B2RQV0</accession>
<accession>E9QMH4</accession>
<accession>Q8CHD4</accession>
<gene>
    <name type="primary">Bltp3b</name>
    <name evidence="5" type="synonym">Kiaa0701</name>
    <name evidence="1" type="synonym">Ship164</name>
    <name evidence="6" type="synonym">Uhrf1bp1l</name>
</gene>
<protein>
    <recommendedName>
        <fullName>Bridge-like lipid transfer protein family member 3B</fullName>
    </recommendedName>
    <alternativeName>
        <fullName evidence="1">Syntaxin-6 Habc-interacting protein of 164 kDa</fullName>
    </alternativeName>
    <alternativeName>
        <fullName evidence="6">UHRF1-binding protein 1-like</fullName>
    </alternativeName>
</protein>
<feature type="chain" id="PRO_0000295720" description="Bridge-like lipid transfer protein family member 3B">
    <location>
        <begin position="1"/>
        <end position="1457"/>
    </location>
</feature>
<feature type="domain" description="Chorein N-terminal" evidence="2">
    <location>
        <begin position="3"/>
        <end position="94"/>
    </location>
</feature>
<feature type="region of interest" description="Disordered" evidence="3">
    <location>
        <begin position="267"/>
        <end position="295"/>
    </location>
</feature>
<feature type="region of interest" description="Disordered" evidence="3">
    <location>
        <begin position="409"/>
        <end position="449"/>
    </location>
</feature>
<feature type="region of interest" description="Disordered" evidence="3">
    <location>
        <begin position="975"/>
        <end position="1038"/>
    </location>
</feature>
<feature type="region of interest" description="Disordered" evidence="3">
    <location>
        <begin position="1056"/>
        <end position="1099"/>
    </location>
</feature>
<feature type="region of interest" description="Disordered" evidence="3">
    <location>
        <begin position="1145"/>
        <end position="1183"/>
    </location>
</feature>
<feature type="coiled-coil region" evidence="2">
    <location>
        <begin position="1410"/>
        <end position="1455"/>
    </location>
</feature>
<feature type="compositionally biased region" description="Polar residues" evidence="3">
    <location>
        <begin position="278"/>
        <end position="295"/>
    </location>
</feature>
<feature type="compositionally biased region" description="Polar residues" evidence="3">
    <location>
        <begin position="980"/>
        <end position="995"/>
    </location>
</feature>
<feature type="compositionally biased region" description="Polar residues" evidence="3">
    <location>
        <begin position="1145"/>
        <end position="1180"/>
    </location>
</feature>
<feature type="modified residue" description="Phosphoserine" evidence="1">
    <location>
        <position position="414"/>
    </location>
</feature>
<feature type="modified residue" description="Phosphoserine" evidence="1">
    <location>
        <position position="418"/>
    </location>
</feature>
<feature type="modified residue" description="Phosphoserine" evidence="8">
    <location>
        <position position="774"/>
    </location>
</feature>
<feature type="modified residue" description="Phosphoserine" evidence="8">
    <location>
        <position position="934"/>
    </location>
</feature>
<feature type="modified residue" description="Phosphoserine" evidence="7 8">
    <location>
        <position position="1008"/>
    </location>
</feature>
<feature type="sequence conflict" description="In Ref. 1; BAC41445 and 3; AAI32135/AAI38093." evidence="4" ref="1 3">
    <original>I</original>
    <variation>T</variation>
    <location>
        <position position="848"/>
    </location>
</feature>
<feature type="sequence conflict" description="In Ref. 1; BAC41445 and 3; AAI32135/AAI38093." evidence="4" ref="1 3">
    <original>I</original>
    <variation>V</variation>
    <location>
        <position position="861"/>
    </location>
</feature>
<feature type="sequence conflict" description="In Ref. 1; BAC41445 and 3; AAI32135/AAI38093." evidence="4" ref="1 3">
    <original>E</original>
    <variation>D</variation>
    <location>
        <position position="1171"/>
    </location>
</feature>
<keyword id="KW-0175">Coiled coil</keyword>
<keyword id="KW-0963">Cytoplasm</keyword>
<keyword id="KW-0967">Endosome</keyword>
<keyword id="KW-0597">Phosphoprotein</keyword>
<keyword id="KW-1185">Reference proteome</keyword>
<evidence type="ECO:0000250" key="1">
    <source>
        <dbReference type="UniProtKB" id="A0JNW5"/>
    </source>
</evidence>
<evidence type="ECO:0000255" key="2"/>
<evidence type="ECO:0000256" key="3">
    <source>
        <dbReference type="SAM" id="MobiDB-lite"/>
    </source>
</evidence>
<evidence type="ECO:0000305" key="4"/>
<evidence type="ECO:0000312" key="5">
    <source>
        <dbReference type="EMBL" id="BAC41445.1"/>
    </source>
</evidence>
<evidence type="ECO:0000312" key="6">
    <source>
        <dbReference type="MGI" id="MGI:2442888"/>
    </source>
</evidence>
<evidence type="ECO:0007744" key="7">
    <source>
    </source>
</evidence>
<evidence type="ECO:0007744" key="8">
    <source>
    </source>
</evidence>
<dbReference type="EMBL" id="AB093261">
    <property type="protein sequence ID" value="BAC41445.1"/>
    <property type="status" value="ALT_INIT"/>
    <property type="molecule type" value="mRNA"/>
</dbReference>
<dbReference type="EMBL" id="AC130216">
    <property type="status" value="NOT_ANNOTATED_CDS"/>
    <property type="molecule type" value="Genomic_DNA"/>
</dbReference>
<dbReference type="EMBL" id="AC134539">
    <property type="status" value="NOT_ANNOTATED_CDS"/>
    <property type="molecule type" value="Genomic_DNA"/>
</dbReference>
<dbReference type="EMBL" id="BC132134">
    <property type="protein sequence ID" value="AAI32135.1"/>
    <property type="molecule type" value="mRNA"/>
</dbReference>
<dbReference type="EMBL" id="BC138092">
    <property type="protein sequence ID" value="AAI38093.1"/>
    <property type="molecule type" value="mRNA"/>
</dbReference>
<dbReference type="CCDS" id="CCDS36028.1"/>
<dbReference type="RefSeq" id="NP_083442.2">
    <property type="nucleotide sequence ID" value="NM_029166.2"/>
</dbReference>
<dbReference type="SMR" id="A2RSJ4"/>
<dbReference type="BioGRID" id="217211">
    <property type="interactions" value="6"/>
</dbReference>
<dbReference type="FunCoup" id="A2RSJ4">
    <property type="interactions" value="2364"/>
</dbReference>
<dbReference type="IntAct" id="A2RSJ4">
    <property type="interactions" value="2"/>
</dbReference>
<dbReference type="STRING" id="10090.ENSMUSP00000020112"/>
<dbReference type="GlyGen" id="A2RSJ4">
    <property type="glycosylation" value="3 sites, 2 N-linked glycans (2 sites)"/>
</dbReference>
<dbReference type="iPTMnet" id="A2RSJ4"/>
<dbReference type="PhosphoSitePlus" id="A2RSJ4"/>
<dbReference type="SwissPalm" id="A2RSJ4"/>
<dbReference type="jPOST" id="A2RSJ4"/>
<dbReference type="PaxDb" id="10090-ENSMUSP00000020112"/>
<dbReference type="PeptideAtlas" id="A2RSJ4"/>
<dbReference type="ProteomicsDB" id="298471"/>
<dbReference type="Pumba" id="A2RSJ4"/>
<dbReference type="Antibodypedia" id="30285">
    <property type="antibodies" value="129 antibodies from 24 providers"/>
</dbReference>
<dbReference type="Ensembl" id="ENSMUST00000020112.7">
    <property type="protein sequence ID" value="ENSMUSP00000020112.6"/>
    <property type="gene ID" value="ENSMUSG00000019951.11"/>
</dbReference>
<dbReference type="GeneID" id="75089"/>
<dbReference type="KEGG" id="mmu:75089"/>
<dbReference type="UCSC" id="uc007gsv.2">
    <property type="organism name" value="mouse"/>
</dbReference>
<dbReference type="AGR" id="MGI:2442888"/>
<dbReference type="CTD" id="23074"/>
<dbReference type="MGI" id="MGI:2442888">
    <property type="gene designation" value="Bltp3b"/>
</dbReference>
<dbReference type="VEuPathDB" id="HostDB:ENSMUSG00000019951"/>
<dbReference type="eggNOG" id="KOG2955">
    <property type="taxonomic scope" value="Eukaryota"/>
</dbReference>
<dbReference type="GeneTree" id="ENSGT00600000084428"/>
<dbReference type="HOGENOM" id="CLU_004782_0_0_1"/>
<dbReference type="InParanoid" id="A2RSJ4"/>
<dbReference type="OMA" id="STAEQCH"/>
<dbReference type="OrthoDB" id="43807at2759"/>
<dbReference type="PhylomeDB" id="A2RSJ4"/>
<dbReference type="TreeFam" id="TF314874"/>
<dbReference type="Reactome" id="R-MMU-9696270">
    <property type="pathway name" value="RND2 GTPase cycle"/>
</dbReference>
<dbReference type="BioGRID-ORCS" id="75089">
    <property type="hits" value="3 hits in 75 CRISPR screens"/>
</dbReference>
<dbReference type="ChiTaRS" id="Uhrf1bp1l">
    <property type="organism name" value="mouse"/>
</dbReference>
<dbReference type="PRO" id="PR:A2RSJ4"/>
<dbReference type="Proteomes" id="UP000000589">
    <property type="component" value="Chromosome 10"/>
</dbReference>
<dbReference type="RNAct" id="A2RSJ4">
    <property type="molecule type" value="protein"/>
</dbReference>
<dbReference type="Bgee" id="ENSMUSG00000019951">
    <property type="expression patterns" value="Expressed in submandibular gland and 243 other cell types or tissues"/>
</dbReference>
<dbReference type="ExpressionAtlas" id="A2RSJ4">
    <property type="expression patterns" value="baseline and differential"/>
</dbReference>
<dbReference type="GO" id="GO:0005829">
    <property type="term" value="C:cytosol"/>
    <property type="evidence" value="ECO:0007669"/>
    <property type="project" value="UniProtKB-SubCell"/>
</dbReference>
<dbReference type="GO" id="GO:0005769">
    <property type="term" value="C:early endosome"/>
    <property type="evidence" value="ECO:0000250"/>
    <property type="project" value="UniProtKB"/>
</dbReference>
<dbReference type="GO" id="GO:0062069">
    <property type="term" value="F:GARP complex binding"/>
    <property type="evidence" value="ECO:0007669"/>
    <property type="project" value="Ensembl"/>
</dbReference>
<dbReference type="GO" id="GO:0120013">
    <property type="term" value="F:lipid transfer activity"/>
    <property type="evidence" value="ECO:0000250"/>
    <property type="project" value="UniProtKB"/>
</dbReference>
<dbReference type="GO" id="GO:0042803">
    <property type="term" value="F:protein homodimerization activity"/>
    <property type="evidence" value="ECO:0007669"/>
    <property type="project" value="Ensembl"/>
</dbReference>
<dbReference type="GO" id="GO:0034498">
    <property type="term" value="P:early endosome to Golgi transport"/>
    <property type="evidence" value="ECO:0000250"/>
    <property type="project" value="UniProtKB"/>
</dbReference>
<dbReference type="GO" id="GO:0120009">
    <property type="term" value="P:intermembrane lipid transfer"/>
    <property type="evidence" value="ECO:0000250"/>
    <property type="project" value="UniProtKB"/>
</dbReference>
<dbReference type="InterPro" id="IPR026728">
    <property type="entry name" value="BLTP3A/B"/>
</dbReference>
<dbReference type="PANTHER" id="PTHR22774:SF17">
    <property type="entry name" value="BRIDGE-LIKE LIPID TRANSFER PROTEIN FAMILY MEMBER 3B"/>
    <property type="match status" value="1"/>
</dbReference>
<dbReference type="PANTHER" id="PTHR22774">
    <property type="entry name" value="CHOREIN N-TERMINAL DOMAIN-CONTAINING PROTEIN"/>
    <property type="match status" value="1"/>
</dbReference>
<dbReference type="Pfam" id="PF24917">
    <property type="entry name" value="BLTP3A_B"/>
    <property type="match status" value="1"/>
</dbReference>
<name>BLT3B_MOUSE</name>
<organism>
    <name type="scientific">Mus musculus</name>
    <name type="common">Mouse</name>
    <dbReference type="NCBI Taxonomy" id="10090"/>
    <lineage>
        <taxon>Eukaryota</taxon>
        <taxon>Metazoa</taxon>
        <taxon>Chordata</taxon>
        <taxon>Craniata</taxon>
        <taxon>Vertebrata</taxon>
        <taxon>Euteleostomi</taxon>
        <taxon>Mammalia</taxon>
        <taxon>Eutheria</taxon>
        <taxon>Euarchontoglires</taxon>
        <taxon>Glires</taxon>
        <taxon>Rodentia</taxon>
        <taxon>Myomorpha</taxon>
        <taxon>Muroidea</taxon>
        <taxon>Muridae</taxon>
        <taxon>Murinae</taxon>
        <taxon>Mus</taxon>
        <taxon>Mus</taxon>
    </lineage>
</organism>
<comment type="function">
    <text evidence="1">Tube-forming lipid transport protein which mediates the transfer of lipids between membranes at organelle contact sites. Required for retrograde traffic of vesicle clusters in the early endocytic pathway to the Golgi complex.</text>
</comment>
<comment type="subunit">
    <text evidence="1">Homodimer (via N-terminus). Associates with the Golgi-associated retrograde protein (GARP) complex. Interacts with GARP complex component VPS52. Interacts (via C-terminal coiled-coil domain) with STX6.</text>
</comment>
<comment type="subcellular location">
    <subcellularLocation>
        <location evidence="1">Cytoplasm</location>
        <location evidence="1">Cytosol</location>
    </subcellularLocation>
    <subcellularLocation>
        <location evidence="1">Early endosome</location>
    </subcellularLocation>
    <text evidence="1">Localizes on a subpopulation of vesicle clusters in the early endocytic pathway.</text>
</comment>
<comment type="sequence caution" evidence="4">
    <conflict type="erroneous initiation">
        <sequence resource="EMBL-CDS" id="BAC41445"/>
    </conflict>
    <text>Extended N-terminus.</text>
</comment>
<sequence>MAGIIKKQILKHLSRFTKNLSPDKINLSTLKGEGELKNLELDEEVLQNMLDLPTWLAISKVFCNKASIRIPWTKLKTQPICLSLDKVIMEMSTCEEPRAPNGPSPIATASGQSEYGFAEKVVEGITVSVNSIVIRIGAKAFNASFELSQLRIYSVNAQWEHGDLRFTRIQDPQRGEVLTFKEINWQMIRIEADATQSSHLEIMCAPVRLITNQSKIRVTLKRRLKDCNVIATKLVLILDDLLWVLTDSQLKAMVQYAKSLSEAIEKSTEQRKSMAPEPTQSSTVTSSAQHVKTPQAANAPDLSDAIVKLFNDFDVKETSHHLVISHLDLHICDDIHAKEKESNRRVSGGAMQLSFTQLTIDYYPYHKAGDSCSHWMYFSDATKTKNGWANELLHEFECNVEMLKQAMKDRNLGSPPKSPTHASPQHTQTEKDSTLKGTPKTPSVLPQPSKAKLMSSSVVVRLADFNIYQVSTAEQCRSSPKSMISCNKKSLYLPQEMSAIYIEFTEYYYPDGKDFPIPSPNLYSQLNALQFTVDERSILWLNQFLLDLKQSLNQFMAVYKLNDSSKSDEHVDIRVDGLMLKFVIPSEVKAGCHQDQPHTVSIQSSEMIATNTRHCPNCRHSDLEALCQDFKECDFFSKTYTRFPKSCDSFNLLHPIFQRHAHEQDTKMHEVYKGNIIPKLNKNTLKTSAATDVWAVYFSQFWIDYEGMKSGKGRPVSFVDAFPLSIWICQPTRYAELQKEFQTCDQVTLNTSQSESSDLAGRMKRKKLLKEYYSTESEPLTNGGQRPSSDTFLRFSSSSSDADVHVLVRVHKHVSMQINHYQYLLLLFIHESLVLLSDTLRRDVEAVIGSPASQTSVCVGILLRSAELALLLHPVNPTSALRSPASESGSPLLPDFLPAENGGFLSSKRKQGGSGIHRIRNATLNHMSDNRSMSVDLSHAPLKDPLLFKSASDTNLQKGTSFLDYLSDKHLGKISEDESSGLSHKSGSGEMTSEGSHTKDVASTDSDSVLNYRDGSTRLSLDDDGNHNPPSNPVTGKGIDAIHSIFRAEDFLPEAASLSENPESSKEEAPPARAPKSQTSLSAKSKERCPPSPAPLSVSYKNMKRSASQVSLDTLSLDSMVLEEQAESDGSDSHVLLGKAMKRNSNTSCQSPAESVNTSANTQTCGEASPEAVSTNSEGTQENRDDLMSVVVFRITGVNGEIDIRGEDTEVCLQVNQVTPSQLGNVSLRHYLGNRPVGSDQKAIIHPKSSPEISLRFESGPGAVVHSLLAEKNGFLQCHIENFTTEFLTSSLLNIQHFLEDETVATVMPMKIQVSNTKINLKDDSPRGSTVSLQPSPVTVHIDRLVVERSDDGSFHIRDSHLFNTGTDFKDGASSDSVVRTRGMCDVRMHSSVTQATQTSPEVPLPSQSANFLDITREQLMEENECLRQRLAQAKMELAEAHSARDELLHQMKRMGL</sequence>
<reference key="1">
    <citation type="journal article" date="2002" name="DNA Res.">
        <title>Prediction of the coding sequences of mouse homologues of KIAA gene: I. The complete nucleotide sequences of 100 mouse KIAA-homologous cDNAs identified by screening of terminal sequences of cDNA clones randomly sampled from size-fractionated libraries.</title>
        <authorList>
            <person name="Okazaki N."/>
            <person name="Kikuno R."/>
            <person name="Ohara R."/>
            <person name="Inamoto S."/>
            <person name="Hara Y."/>
            <person name="Nagase T."/>
            <person name="Ohara O."/>
            <person name="Koga H."/>
        </authorList>
    </citation>
    <scope>NUCLEOTIDE SEQUENCE [LARGE SCALE MRNA]</scope>
</reference>
<reference key="2">
    <citation type="journal article" date="2009" name="PLoS Biol.">
        <title>Lineage-specific biology revealed by a finished genome assembly of the mouse.</title>
        <authorList>
            <person name="Church D.M."/>
            <person name="Goodstadt L."/>
            <person name="Hillier L.W."/>
            <person name="Zody M.C."/>
            <person name="Goldstein S."/>
            <person name="She X."/>
            <person name="Bult C.J."/>
            <person name="Agarwala R."/>
            <person name="Cherry J.L."/>
            <person name="DiCuccio M."/>
            <person name="Hlavina W."/>
            <person name="Kapustin Y."/>
            <person name="Meric P."/>
            <person name="Maglott D."/>
            <person name="Birtle Z."/>
            <person name="Marques A.C."/>
            <person name="Graves T."/>
            <person name="Zhou S."/>
            <person name="Teague B."/>
            <person name="Potamousis K."/>
            <person name="Churas C."/>
            <person name="Place M."/>
            <person name="Herschleb J."/>
            <person name="Runnheim R."/>
            <person name="Forrest D."/>
            <person name="Amos-Landgraf J."/>
            <person name="Schwartz D.C."/>
            <person name="Cheng Z."/>
            <person name="Lindblad-Toh K."/>
            <person name="Eichler E.E."/>
            <person name="Ponting C.P."/>
        </authorList>
    </citation>
    <scope>NUCLEOTIDE SEQUENCE [LARGE SCALE GENOMIC DNA]</scope>
    <source>
        <strain>C57BL/6J</strain>
    </source>
</reference>
<reference key="3">
    <citation type="journal article" date="2004" name="Genome Res.">
        <title>The status, quality, and expansion of the NIH full-length cDNA project: the Mammalian Gene Collection (MGC).</title>
        <authorList>
            <consortium name="The MGC Project Team"/>
        </authorList>
    </citation>
    <scope>NUCLEOTIDE SEQUENCE [LARGE SCALE MRNA]</scope>
    <source>
        <tissue>Brain</tissue>
    </source>
</reference>
<reference key="4">
    <citation type="journal article" date="2007" name="Proc. Natl. Acad. Sci. U.S.A.">
        <title>Large-scale phosphorylation analysis of mouse liver.</title>
        <authorList>
            <person name="Villen J."/>
            <person name="Beausoleil S.A."/>
            <person name="Gerber S.A."/>
            <person name="Gygi S.P."/>
        </authorList>
    </citation>
    <scope>PHOSPHORYLATION [LARGE SCALE ANALYSIS] AT SER-1008</scope>
    <scope>IDENTIFICATION BY MASS SPECTROMETRY [LARGE SCALE ANALYSIS]</scope>
    <source>
        <tissue>Liver</tissue>
    </source>
</reference>
<reference key="5">
    <citation type="journal article" date="2010" name="Cell">
        <title>A tissue-specific atlas of mouse protein phosphorylation and expression.</title>
        <authorList>
            <person name="Huttlin E.L."/>
            <person name="Jedrychowski M.P."/>
            <person name="Elias J.E."/>
            <person name="Goswami T."/>
            <person name="Rad R."/>
            <person name="Beausoleil S.A."/>
            <person name="Villen J."/>
            <person name="Haas W."/>
            <person name="Sowa M.E."/>
            <person name="Gygi S.P."/>
        </authorList>
    </citation>
    <scope>PHOSPHORYLATION [LARGE SCALE ANALYSIS] AT SER-774; SER-934 AND SER-1008</scope>
    <scope>IDENTIFICATION BY MASS SPECTROMETRY [LARGE SCALE ANALYSIS]</scope>
    <source>
        <tissue>Brain</tissue>
        <tissue>Brown adipose tissue</tissue>
        <tissue>Kidney</tissue>
        <tissue>Liver</tissue>
        <tissue>Lung</tissue>
        <tissue>Spleen</tissue>
        <tissue>Testis</tissue>
    </source>
</reference>
<reference key="6">
    <citation type="journal article" date="2022" name="J. Cell Biol.">
        <title>SHIP164 is a chorein motif lipid transfer protein that controls endosome-Golgi membrane traffic.</title>
        <authorList>
            <person name="Hanna M.G."/>
            <person name="Suen P.H."/>
            <person name="Wu Y."/>
            <person name="Reinisch K.M."/>
            <person name="De Camilli P."/>
        </authorList>
    </citation>
    <scope>INTERACTION WITH STX6</scope>
</reference>
<proteinExistence type="evidence at protein level"/>